<feature type="chain" id="PRO_0000210568" description="Uncharacterized protein MG366 homolog">
    <location>
        <begin position="1"/>
        <end position="664"/>
    </location>
</feature>
<organism>
    <name type="scientific">Mycoplasma pneumoniae (strain ATCC 29342 / M129 / Subtype 1)</name>
    <name type="common">Mycoplasmoides pneumoniae</name>
    <dbReference type="NCBI Taxonomy" id="272634"/>
    <lineage>
        <taxon>Bacteria</taxon>
        <taxon>Bacillati</taxon>
        <taxon>Mycoplasmatota</taxon>
        <taxon>Mycoplasmoidales</taxon>
        <taxon>Mycoplasmoidaceae</taxon>
        <taxon>Mycoplasmoides</taxon>
    </lineage>
</organism>
<accession>P75234</accession>
<sequence length="664" mass="76770">MLTKAFFLKNFDRSKELIPLSYADVFGAASQLLKKHHKQVDTEIDVQEDLIEDPVFEIDILELLNEAPELLFDSKNPRVKEAQIIIEKAKKDIASYFHLDNILDTDNLGLKATVTEKIQFTEKQIEAAVQNKKAAIIFKPVFTVNQCLIQPDAVVVHANGLCEFVVIKATTNTKRKFILEIIYDFLLFEKLGKYKLVNYYFCIVNYELKNKHNVSFFLNTEIKTAKNSSTSKTKEEQVLYGHLPFNDPKKIAYIHSKKSGGVNGFLLVKLVDNIIRSGVTNLEQIISFVFRELNAPSIRSLKQIISEVAKVQLDFWNIIDDVKQHQELQDNQITFNYSDAFNSFWNNYLLRNLIKLVFAYKYSEIFRLSGKLAKWDEVVEAYKENKSVKIDGFLYELNQGKMKKTKNPATSQFNKIHFFLRAWNDKKGIAVGNKFKSVWQKLKEKKVYFDFETISSAVRVIDKSLPFTQIVTQCSLIVDDNTESDKSKLVCQNLIFDPLTIGIEDFKTVVDALYQKQCDQYSFVVYNKSFEKNRLLEMATFINEAPYQQRVQAIIENLFDLADIFGLENDCLAFKQLDGFSSIKKVLPMIDQRFLDASRTVSYQSLKVQKGDVAQELTLARFLNCLDEQQWAQTALELKQYCENDVRAMIAIELFIKDFITNQL</sequence>
<protein>
    <recommendedName>
        <fullName>Uncharacterized protein MG366 homolog</fullName>
    </recommendedName>
</protein>
<keyword id="KW-1185">Reference proteome</keyword>
<proteinExistence type="predicted"/>
<reference key="1">
    <citation type="journal article" date="1996" name="Nucleic Acids Res.">
        <title>Complete sequence analysis of the genome of the bacterium Mycoplasma pneumoniae.</title>
        <authorList>
            <person name="Himmelreich R."/>
            <person name="Hilbert H."/>
            <person name="Plagens H."/>
            <person name="Pirkl E."/>
            <person name="Li B.-C."/>
            <person name="Herrmann R."/>
        </authorList>
    </citation>
    <scope>NUCLEOTIDE SEQUENCE [LARGE SCALE GENOMIC DNA]</scope>
    <source>
        <strain>ATCC 29342 / M129 / Subtype 1</strain>
    </source>
</reference>
<name>Y544_MYCPN</name>
<dbReference type="EMBL" id="U00089">
    <property type="protein sequence ID" value="AAB95946.1"/>
    <property type="molecule type" value="Genomic_DNA"/>
</dbReference>
<dbReference type="PIR" id="S73624">
    <property type="entry name" value="S73624"/>
</dbReference>
<dbReference type="RefSeq" id="NP_110233.1">
    <property type="nucleotide sequence ID" value="NC_000912.1"/>
</dbReference>
<dbReference type="RefSeq" id="WP_010874901.1">
    <property type="nucleotide sequence ID" value="NZ_OU342337.1"/>
</dbReference>
<dbReference type="IntAct" id="P75234">
    <property type="interactions" value="2"/>
</dbReference>
<dbReference type="STRING" id="272634.MPN_544"/>
<dbReference type="EnsemblBacteria" id="AAB95946">
    <property type="protein sequence ID" value="AAB95946"/>
    <property type="gene ID" value="MPN_544"/>
</dbReference>
<dbReference type="KEGG" id="mpn:MPN_544"/>
<dbReference type="PATRIC" id="fig|272634.6.peg.606"/>
<dbReference type="HOGENOM" id="CLU_402679_0_0_14"/>
<dbReference type="OrthoDB" id="9783873at2"/>
<dbReference type="BioCyc" id="MPNE272634:G1GJ3-895-MONOMER"/>
<dbReference type="Proteomes" id="UP000000808">
    <property type="component" value="Chromosome"/>
</dbReference>
<dbReference type="InterPro" id="IPR021301">
    <property type="entry name" value="DUF2779"/>
</dbReference>
<dbReference type="NCBIfam" id="NF045869">
    <property type="entry name" value="UU173_fam"/>
    <property type="match status" value="1"/>
</dbReference>
<dbReference type="Pfam" id="PF11074">
    <property type="entry name" value="DUF2779"/>
    <property type="match status" value="1"/>
</dbReference>
<gene>
    <name type="ordered locus">MPN_544</name>
    <name type="ORF">G12_orf664</name>
    <name type="ORF">MP298</name>
</gene>